<accession>P10846</accession>
<comment type="function">
    <text>Alpha-amylase inhibitor.</text>
</comment>
<comment type="subunit">
    <text>Homodimer.</text>
</comment>
<comment type="subcellular location">
    <subcellularLocation>
        <location>Secreted</location>
    </subcellularLocation>
</comment>
<comment type="tissue specificity">
    <text>Endosperm.</text>
</comment>
<comment type="PTM">
    <text>The disulfide bonds are essential for the inhibitor activity.</text>
</comment>
<comment type="similarity">
    <text evidence="2">Belongs to the protease inhibitor I6 (cereal trypsin/alpha-amylase inhibitor) family.</text>
</comment>
<reference key="1">
    <citation type="journal article" date="1989" name="Eur. J. Biochem.">
        <title>New dimeric inhibitor of heterologous alpha-amylases encoded by a duplicated gene in the short arm of chromosome 3B of wheat (Triticum aestivum L.).</title>
        <authorList>
            <person name="Sanchez-Monge R."/>
            <person name="Gomez L."/>
            <person name="Garcia-Olmedo F."/>
            <person name="Salcedo G."/>
        </authorList>
    </citation>
    <scope>PROTEIN SEQUENCE</scope>
    <source>
        <strain>cv. Chinese Spring</strain>
    </source>
</reference>
<protein>
    <recommendedName>
        <fullName>Alpha-amylase inhibitor WDAI-3</fullName>
    </recommendedName>
</protein>
<sequence>SGPWMCYPGYAFKVPALPGCRPVLLLQCNGSQVPEAVLRDCCQQ</sequence>
<proteinExistence type="evidence at protein level"/>
<keyword id="KW-0022">Alpha-amylase inhibitor</keyword>
<keyword id="KW-0903">Direct protein sequencing</keyword>
<keyword id="KW-1015">Disulfide bond</keyword>
<keyword id="KW-1185">Reference proteome</keyword>
<keyword id="KW-0964">Secreted</keyword>
<gene>
    <name type="primary">IHA-B1-2</name>
</gene>
<organism>
    <name type="scientific">Triticum aestivum</name>
    <name type="common">Wheat</name>
    <dbReference type="NCBI Taxonomy" id="4565"/>
    <lineage>
        <taxon>Eukaryota</taxon>
        <taxon>Viridiplantae</taxon>
        <taxon>Streptophyta</taxon>
        <taxon>Embryophyta</taxon>
        <taxon>Tracheophyta</taxon>
        <taxon>Spermatophyta</taxon>
        <taxon>Magnoliopsida</taxon>
        <taxon>Liliopsida</taxon>
        <taxon>Poales</taxon>
        <taxon>Poaceae</taxon>
        <taxon>BOP clade</taxon>
        <taxon>Pooideae</taxon>
        <taxon>Triticodae</taxon>
        <taxon>Triticeae</taxon>
        <taxon>Triticinae</taxon>
        <taxon>Triticum</taxon>
    </lineage>
</organism>
<evidence type="ECO:0000250" key="1"/>
<evidence type="ECO:0000305" key="2"/>
<feature type="chain" id="PRO_0000070487" description="Alpha-amylase inhibitor WDAI-3">
    <location>
        <begin position="1"/>
        <end position="44" status="greater than"/>
    </location>
</feature>
<feature type="disulfide bond" evidence="1">
    <location>
        <begin position="20"/>
        <end position="41"/>
    </location>
</feature>
<feature type="disulfide bond" evidence="1">
    <location>
        <begin position="28"/>
        <end status="unknown"/>
    </location>
</feature>
<feature type="disulfide bond" evidence="1">
    <location>
        <begin position="42"/>
        <end status="unknown"/>
    </location>
</feature>
<feature type="non-terminal residue">
    <location>
        <position position="44"/>
    </location>
</feature>
<dbReference type="SMR" id="P10846"/>
<dbReference type="STRING" id="4565.P10846"/>
<dbReference type="Proteomes" id="UP000019116">
    <property type="component" value="Unplaced"/>
</dbReference>
<dbReference type="ExpressionAtlas" id="P10846">
    <property type="expression patterns" value="baseline"/>
</dbReference>
<dbReference type="GO" id="GO:0005576">
    <property type="term" value="C:extracellular region"/>
    <property type="evidence" value="ECO:0007669"/>
    <property type="project" value="UniProtKB-SubCell"/>
</dbReference>
<dbReference type="GO" id="GO:0015066">
    <property type="term" value="F:alpha-amylase inhibitor activity"/>
    <property type="evidence" value="ECO:0007669"/>
    <property type="project" value="UniProtKB-KW"/>
</dbReference>
<dbReference type="GO" id="GO:0004867">
    <property type="term" value="F:serine-type endopeptidase inhibitor activity"/>
    <property type="evidence" value="ECO:0007669"/>
    <property type="project" value="InterPro"/>
</dbReference>
<dbReference type="Gene3D" id="1.10.110.10">
    <property type="entry name" value="Plant lipid-transfer and hydrophobic proteins"/>
    <property type="match status" value="1"/>
</dbReference>
<dbReference type="InterPro" id="IPR006106">
    <property type="entry name" value="Allergen/soft/tryp_amyl_inhib"/>
</dbReference>
<dbReference type="InterPro" id="IPR006105">
    <property type="entry name" value="Allergen/tryp_amyl_inhib_CS"/>
</dbReference>
<dbReference type="InterPro" id="IPR036312">
    <property type="entry name" value="Bifun_inhib/LTP/seed_sf"/>
</dbReference>
<dbReference type="PRINTS" id="PR00808">
    <property type="entry name" value="AMLASEINHBTR"/>
</dbReference>
<dbReference type="SUPFAM" id="SSF47699">
    <property type="entry name" value="Bifunctional inhibitor/lipid-transfer protein/seed storage 2S albumin"/>
    <property type="match status" value="1"/>
</dbReference>
<dbReference type="PROSITE" id="PS00426">
    <property type="entry name" value="CEREAL_TRYP_AMYL_INH"/>
    <property type="match status" value="1"/>
</dbReference>
<name>IAA3_WHEAT</name>